<accession>P0A8U1</accession>
<accession>P43526</accession>
<protein>
    <recommendedName>
        <fullName>Protein Syd</fullName>
    </recommendedName>
</protein>
<feature type="chain" id="PRO_0000214138" description="Protein Syd">
    <location>
        <begin position="1"/>
        <end position="181"/>
    </location>
</feature>
<reference key="1">
    <citation type="journal article" date="2002" name="Proc. Natl. Acad. Sci. U.S.A.">
        <title>Extensive mosaic structure revealed by the complete genome sequence of uropathogenic Escherichia coli.</title>
        <authorList>
            <person name="Welch R.A."/>
            <person name="Burland V."/>
            <person name="Plunkett G. III"/>
            <person name="Redford P."/>
            <person name="Roesch P."/>
            <person name="Rasko D."/>
            <person name="Buckles E.L."/>
            <person name="Liou S.-R."/>
            <person name="Boutin A."/>
            <person name="Hackett J."/>
            <person name="Stroud D."/>
            <person name="Mayhew G.F."/>
            <person name="Rose D.J."/>
            <person name="Zhou S."/>
            <person name="Schwartz D.C."/>
            <person name="Perna N.T."/>
            <person name="Mobley H.L.T."/>
            <person name="Donnenberg M.S."/>
            <person name="Blattner F.R."/>
        </authorList>
    </citation>
    <scope>NUCLEOTIDE SEQUENCE [LARGE SCALE GENOMIC DNA]</scope>
    <source>
        <strain>CFT073 / ATCC 700928 / UPEC</strain>
    </source>
</reference>
<dbReference type="EMBL" id="AE014075">
    <property type="protein sequence ID" value="AAN81806.1"/>
    <property type="molecule type" value="Genomic_DNA"/>
</dbReference>
<dbReference type="RefSeq" id="WP_000342431.1">
    <property type="nucleotide sequence ID" value="NZ_CP051263.1"/>
</dbReference>
<dbReference type="SMR" id="P0A8U1"/>
<dbReference type="STRING" id="199310.c3359"/>
<dbReference type="GeneID" id="93779205"/>
<dbReference type="KEGG" id="ecc:c3359"/>
<dbReference type="eggNOG" id="ENOG502ZCMR">
    <property type="taxonomic scope" value="Bacteria"/>
</dbReference>
<dbReference type="HOGENOM" id="CLU_121866_0_0_6"/>
<dbReference type="BioCyc" id="ECOL199310:C3359-MONOMER"/>
<dbReference type="Proteomes" id="UP000001410">
    <property type="component" value="Chromosome"/>
</dbReference>
<dbReference type="GO" id="GO:0009898">
    <property type="term" value="C:cytoplasmic side of plasma membrane"/>
    <property type="evidence" value="ECO:0007669"/>
    <property type="project" value="InterPro"/>
</dbReference>
<dbReference type="CDD" id="cd16323">
    <property type="entry name" value="Syd"/>
    <property type="match status" value="1"/>
</dbReference>
<dbReference type="FunFam" id="3.40.1580.20:FF:000001">
    <property type="entry name" value="Protein Syd"/>
    <property type="match status" value="1"/>
</dbReference>
<dbReference type="Gene3D" id="3.40.1580.20">
    <property type="entry name" value="Syd protein"/>
    <property type="match status" value="1"/>
</dbReference>
<dbReference type="HAMAP" id="MF_01104">
    <property type="entry name" value="Syd"/>
    <property type="match status" value="1"/>
</dbReference>
<dbReference type="InterPro" id="IPR009948">
    <property type="entry name" value="Syd"/>
</dbReference>
<dbReference type="InterPro" id="IPR038228">
    <property type="entry name" value="Syd_sf"/>
</dbReference>
<dbReference type="NCBIfam" id="NF003439">
    <property type="entry name" value="PRK04968.1"/>
    <property type="match status" value="1"/>
</dbReference>
<dbReference type="Pfam" id="PF07348">
    <property type="entry name" value="Syd"/>
    <property type="match status" value="1"/>
</dbReference>
<evidence type="ECO:0000250" key="1"/>
<evidence type="ECO:0000305" key="2"/>
<organism>
    <name type="scientific">Escherichia coli O6:H1 (strain CFT073 / ATCC 700928 / UPEC)</name>
    <dbReference type="NCBI Taxonomy" id="199310"/>
    <lineage>
        <taxon>Bacteria</taxon>
        <taxon>Pseudomonadati</taxon>
        <taxon>Pseudomonadota</taxon>
        <taxon>Gammaproteobacteria</taxon>
        <taxon>Enterobacterales</taxon>
        <taxon>Enterobacteriaceae</taxon>
        <taxon>Escherichia</taxon>
    </lineage>
</organism>
<proteinExistence type="inferred from homology"/>
<gene>
    <name type="primary">syd</name>
    <name type="ordered locus">c3359</name>
</gene>
<comment type="function">
    <text evidence="1">Interacts with the SecY protein in vivo. May bind preferentially to an uncomplexed state of SecY, thus functioning either as a chelating agent for excess SecY in the cell or as a regulatory factor that negatively controls the translocase function (By similarity).</text>
</comment>
<comment type="subcellular location">
    <subcellularLocation>
        <location evidence="1">Cell inner membrane</location>
        <topology evidence="1">Peripheral membrane protein</topology>
        <orientation evidence="1">Cytoplasmic side</orientation>
    </subcellularLocation>
    <text evidence="1">Loosely associated with the cytoplasmic side of the inner membrane, probably via SecY.</text>
</comment>
<comment type="similarity">
    <text evidence="2">Belongs to the Syd family.</text>
</comment>
<keyword id="KW-0997">Cell inner membrane</keyword>
<keyword id="KW-1003">Cell membrane</keyword>
<keyword id="KW-0472">Membrane</keyword>
<keyword id="KW-1185">Reference proteome</keyword>
<name>SYDP_ECOL6</name>
<sequence>MDDLTAQALKDFTARYCDAWHEEHKSWPLSEELYGVPSPCIISTTEDAVYWQPQPFTGEQNVNAVERAFDIVIQPTIHTFYTTQFAGDMHAQFGDIKLTLLQTWSEDDFRRVQENLIGHLVTQKRLKLPPTLFIATLEEELEVISVCNLSGEVCKETLGTRKRTHLASNLAEFLNQLKPLL</sequence>